<protein>
    <recommendedName>
        <fullName>UPF0758 protein Cpar_0627</fullName>
    </recommendedName>
</protein>
<evidence type="ECO:0000255" key="1">
    <source>
        <dbReference type="PROSITE-ProRule" id="PRU01182"/>
    </source>
</evidence>
<evidence type="ECO:0000305" key="2"/>
<name>Y627_CHLP8</name>
<proteinExistence type="inferred from homology"/>
<organism>
    <name type="scientific">Chlorobaculum parvum (strain DSM 263 / NCIMB 8327)</name>
    <name type="common">Chlorobium vibrioforme subsp. thiosulfatophilum</name>
    <dbReference type="NCBI Taxonomy" id="517417"/>
    <lineage>
        <taxon>Bacteria</taxon>
        <taxon>Pseudomonadati</taxon>
        <taxon>Chlorobiota</taxon>
        <taxon>Chlorobiia</taxon>
        <taxon>Chlorobiales</taxon>
        <taxon>Chlorobiaceae</taxon>
        <taxon>Chlorobaculum</taxon>
    </lineage>
</organism>
<comment type="similarity">
    <text evidence="2">Belongs to the UPF0758 family.</text>
</comment>
<reference key="1">
    <citation type="submission" date="2008-06" db="EMBL/GenBank/DDBJ databases">
        <title>Complete sequence of Chlorobaculum parvum NCIB 8327.</title>
        <authorList>
            <consortium name="US DOE Joint Genome Institute"/>
            <person name="Lucas S."/>
            <person name="Copeland A."/>
            <person name="Lapidus A."/>
            <person name="Glavina del Rio T."/>
            <person name="Dalin E."/>
            <person name="Tice H."/>
            <person name="Bruce D."/>
            <person name="Goodwin L."/>
            <person name="Pitluck S."/>
            <person name="Schmutz J."/>
            <person name="Larimer F."/>
            <person name="Land M."/>
            <person name="Hauser L."/>
            <person name="Kyrpides N."/>
            <person name="Mikhailova N."/>
            <person name="Zhao F."/>
            <person name="Li T."/>
            <person name="Liu Z."/>
            <person name="Overmann J."/>
            <person name="Bryant D.A."/>
            <person name="Richardson P."/>
        </authorList>
    </citation>
    <scope>NUCLEOTIDE SEQUENCE [LARGE SCALE GENOMIC DNA]</scope>
    <source>
        <strain>DSM 263 / NCIMB 8327</strain>
    </source>
</reference>
<feature type="chain" id="PRO_1000089801" description="UPF0758 protein Cpar_0627">
    <location>
        <begin position="1"/>
        <end position="222"/>
    </location>
</feature>
<feature type="domain" description="MPN" evidence="1">
    <location>
        <begin position="100"/>
        <end position="222"/>
    </location>
</feature>
<feature type="short sequence motif" description="JAMM motif" evidence="1">
    <location>
        <begin position="171"/>
        <end position="184"/>
    </location>
</feature>
<feature type="binding site" evidence="1">
    <location>
        <position position="171"/>
    </location>
    <ligand>
        <name>Zn(2+)</name>
        <dbReference type="ChEBI" id="CHEBI:29105"/>
        <note>catalytic</note>
    </ligand>
</feature>
<feature type="binding site" evidence="1">
    <location>
        <position position="173"/>
    </location>
    <ligand>
        <name>Zn(2+)</name>
        <dbReference type="ChEBI" id="CHEBI:29105"/>
        <note>catalytic</note>
    </ligand>
</feature>
<feature type="binding site" evidence="1">
    <location>
        <position position="184"/>
    </location>
    <ligand>
        <name>Zn(2+)</name>
        <dbReference type="ChEBI" id="CHEBI:29105"/>
        <note>catalytic</note>
    </ligand>
</feature>
<gene>
    <name type="ordered locus">Cpar_0627</name>
</gene>
<dbReference type="EMBL" id="CP001099">
    <property type="protein sequence ID" value="ACF11047.1"/>
    <property type="molecule type" value="Genomic_DNA"/>
</dbReference>
<dbReference type="RefSeq" id="WP_012501880.1">
    <property type="nucleotide sequence ID" value="NC_011027.1"/>
</dbReference>
<dbReference type="SMR" id="B3QM94"/>
<dbReference type="STRING" id="517417.Cpar_0627"/>
<dbReference type="KEGG" id="cpc:Cpar_0627"/>
<dbReference type="eggNOG" id="COG2003">
    <property type="taxonomic scope" value="Bacteria"/>
</dbReference>
<dbReference type="HOGENOM" id="CLU_073529_0_2_10"/>
<dbReference type="OrthoDB" id="9804482at2"/>
<dbReference type="Proteomes" id="UP000008811">
    <property type="component" value="Chromosome"/>
</dbReference>
<dbReference type="GO" id="GO:0046872">
    <property type="term" value="F:metal ion binding"/>
    <property type="evidence" value="ECO:0007669"/>
    <property type="project" value="UniProtKB-KW"/>
</dbReference>
<dbReference type="GO" id="GO:0008237">
    <property type="term" value="F:metallopeptidase activity"/>
    <property type="evidence" value="ECO:0007669"/>
    <property type="project" value="UniProtKB-KW"/>
</dbReference>
<dbReference type="GO" id="GO:0006508">
    <property type="term" value="P:proteolysis"/>
    <property type="evidence" value="ECO:0007669"/>
    <property type="project" value="UniProtKB-KW"/>
</dbReference>
<dbReference type="CDD" id="cd08071">
    <property type="entry name" value="MPN_DUF2466"/>
    <property type="match status" value="1"/>
</dbReference>
<dbReference type="Gene3D" id="3.40.140.10">
    <property type="entry name" value="Cytidine Deaminase, domain 2"/>
    <property type="match status" value="1"/>
</dbReference>
<dbReference type="InterPro" id="IPR037518">
    <property type="entry name" value="MPN"/>
</dbReference>
<dbReference type="InterPro" id="IPR025657">
    <property type="entry name" value="RadC_JAB"/>
</dbReference>
<dbReference type="InterPro" id="IPR010994">
    <property type="entry name" value="RuvA_2-like"/>
</dbReference>
<dbReference type="InterPro" id="IPR001405">
    <property type="entry name" value="UPF0758"/>
</dbReference>
<dbReference type="InterPro" id="IPR020891">
    <property type="entry name" value="UPF0758_CS"/>
</dbReference>
<dbReference type="InterPro" id="IPR046778">
    <property type="entry name" value="UPF0758_N"/>
</dbReference>
<dbReference type="NCBIfam" id="NF000642">
    <property type="entry name" value="PRK00024.1"/>
    <property type="match status" value="1"/>
</dbReference>
<dbReference type="NCBIfam" id="TIGR00608">
    <property type="entry name" value="radc"/>
    <property type="match status" value="1"/>
</dbReference>
<dbReference type="PANTHER" id="PTHR30471">
    <property type="entry name" value="DNA REPAIR PROTEIN RADC"/>
    <property type="match status" value="1"/>
</dbReference>
<dbReference type="PANTHER" id="PTHR30471:SF3">
    <property type="entry name" value="UPF0758 PROTEIN YEES-RELATED"/>
    <property type="match status" value="1"/>
</dbReference>
<dbReference type="Pfam" id="PF04002">
    <property type="entry name" value="RadC"/>
    <property type="match status" value="1"/>
</dbReference>
<dbReference type="Pfam" id="PF20582">
    <property type="entry name" value="UPF0758_N"/>
    <property type="match status" value="1"/>
</dbReference>
<dbReference type="SUPFAM" id="SSF102712">
    <property type="entry name" value="JAB1/MPN domain"/>
    <property type="match status" value="1"/>
</dbReference>
<dbReference type="SUPFAM" id="SSF47781">
    <property type="entry name" value="RuvA domain 2-like"/>
    <property type="match status" value="1"/>
</dbReference>
<dbReference type="PROSITE" id="PS50249">
    <property type="entry name" value="MPN"/>
    <property type="match status" value="1"/>
</dbReference>
<dbReference type="PROSITE" id="PS01302">
    <property type="entry name" value="UPF0758"/>
    <property type="match status" value="1"/>
</dbReference>
<sequence length="222" mass="24976">MRIHDIDPDNRPRERFLRSGKEALSPAELLALILRSGTPNLNIIDTCNQLIAEHSLEGLADLSLHELQKIPGIGQAKAMQIAAVFELHRRIRFAKNINRKIQGAQDVFEYMQGRIPDESKEHLFVLFLNTKNRILSHESVTVGTLTSSLIHPREIFKAAIRQSAHSIILVHNHPSGDVQPSNADKQVTSILKKSGDLLQIALLDHVIVGNDDWFSFRDHSLL</sequence>
<accession>B3QM94</accession>
<keyword id="KW-0378">Hydrolase</keyword>
<keyword id="KW-0479">Metal-binding</keyword>
<keyword id="KW-0482">Metalloprotease</keyword>
<keyword id="KW-0645">Protease</keyword>
<keyword id="KW-0862">Zinc</keyword>